<protein>
    <recommendedName>
        <fullName>Vignain</fullName>
        <ecNumber evidence="3">3.4.22.-</ecNumber>
    </recommendedName>
    <alternativeName>
        <fullName>Cysteine endopeptidase</fullName>
    </alternativeName>
</protein>
<sequence length="360" mass="40111">MQKFILLALSLALVLAITESFDFHEKELESEESLWGLYERWRSHHTVSRSLHEKQKRFNVFKHNAMHVHNANKMDKPYKLKLNKFADMTNHEFRNTYSGSKVKHHRMFRGGPRGNGTFMYEKVDTVPASVDWRKKGAVTSVKDQGQCGSCWAFSTIVAVEGINQIKTNKLVSLSEQELVDCDTDQNQGCNGGLMDYAFEFIKQRGGITTEANYPYEAYDGTCDVSKENAPAVSIDGHENVPENDENALLKAVANQPVSVAIDAGGSDFQFYSEGVFTGSCGTELDHGVAIVGYGTTIDGTKYWTVKNSWGPEWGEKGYIRMERGISDKEGLCGIAMEASYPIKKSSNNPSGIKSSPKDEL</sequence>
<name>CYSEP_RICCO</name>
<feature type="signal peptide">
    <location>
        <begin position="1"/>
        <end position="20"/>
    </location>
</feature>
<feature type="propeptide" id="PRO_0000026442" description="Activation peptide" evidence="2">
    <location>
        <begin position="21"/>
        <end position="124"/>
    </location>
</feature>
<feature type="chain" id="PRO_0000026443" description="Vignain">
    <location>
        <begin position="125"/>
        <end position="353"/>
    </location>
</feature>
<feature type="propeptide" id="PRO_0000026444" description="Removed in mature form" evidence="4">
    <location>
        <begin position="354"/>
        <end position="360"/>
    </location>
</feature>
<feature type="region of interest" description="Disordered" evidence="9">
    <location>
        <begin position="341"/>
        <end position="360"/>
    </location>
</feature>
<feature type="region of interest" description="Prevents secretion from ER" evidence="1">
    <location>
        <begin position="357"/>
        <end position="360"/>
    </location>
</feature>
<feature type="compositionally biased region" description="Polar residues" evidence="9">
    <location>
        <begin position="344"/>
        <end position="353"/>
    </location>
</feature>
<feature type="active site" evidence="6">
    <location>
        <position position="150"/>
    </location>
</feature>
<feature type="active site" evidence="7">
    <location>
        <position position="286"/>
    </location>
</feature>
<feature type="active site" evidence="8">
    <location>
        <position position="307"/>
    </location>
</feature>
<feature type="glycosylation site" description="N-linked (GlcNAc...) asparagine" evidence="5">
    <location>
        <position position="115"/>
    </location>
</feature>
<feature type="disulfide bond" evidence="11 12">
    <location>
        <begin position="147"/>
        <end position="189"/>
    </location>
</feature>
<feature type="disulfide bond" evidence="11 12">
    <location>
        <begin position="181"/>
        <end position="222"/>
    </location>
</feature>
<feature type="disulfide bond" evidence="11 12">
    <location>
        <begin position="280"/>
        <end position="332"/>
    </location>
</feature>
<feature type="turn" evidence="13">
    <location>
        <begin position="132"/>
        <end position="136"/>
    </location>
</feature>
<feature type="strand" evidence="13">
    <location>
        <begin position="146"/>
        <end position="148"/>
    </location>
</feature>
<feature type="helix" evidence="13">
    <location>
        <begin position="150"/>
        <end position="167"/>
    </location>
</feature>
<feature type="helix" evidence="13">
    <location>
        <begin position="175"/>
        <end position="181"/>
    </location>
</feature>
<feature type="helix" evidence="13">
    <location>
        <begin position="194"/>
        <end position="204"/>
    </location>
</feature>
<feature type="turn" evidence="13">
    <location>
        <begin position="210"/>
        <end position="212"/>
    </location>
</feature>
<feature type="helix" evidence="13">
    <location>
        <begin position="224"/>
        <end position="227"/>
    </location>
</feature>
<feature type="strand" evidence="13">
    <location>
        <begin position="236"/>
        <end position="239"/>
    </location>
</feature>
<feature type="helix" evidence="13">
    <location>
        <begin position="245"/>
        <end position="254"/>
    </location>
</feature>
<feature type="strand" evidence="13">
    <location>
        <begin position="257"/>
        <end position="261"/>
    </location>
</feature>
<feature type="helix" evidence="13">
    <location>
        <begin position="266"/>
        <end position="269"/>
    </location>
</feature>
<feature type="strand" evidence="13">
    <location>
        <begin position="273"/>
        <end position="276"/>
    </location>
</feature>
<feature type="strand" evidence="13">
    <location>
        <begin position="286"/>
        <end position="295"/>
    </location>
</feature>
<feature type="strand" evidence="13">
    <location>
        <begin position="301"/>
        <end position="306"/>
    </location>
</feature>
<feature type="strand" evidence="13">
    <location>
        <begin position="318"/>
        <end position="322"/>
    </location>
</feature>
<feature type="helix" evidence="13">
    <location>
        <begin position="331"/>
        <end position="333"/>
    </location>
</feature>
<feature type="strand" evidence="13">
    <location>
        <begin position="339"/>
        <end position="342"/>
    </location>
</feature>
<organism>
    <name type="scientific">Ricinus communis</name>
    <name type="common">Castor bean</name>
    <dbReference type="NCBI Taxonomy" id="3988"/>
    <lineage>
        <taxon>Eukaryota</taxon>
        <taxon>Viridiplantae</taxon>
        <taxon>Streptophyta</taxon>
        <taxon>Embryophyta</taxon>
        <taxon>Tracheophyta</taxon>
        <taxon>Spermatophyta</taxon>
        <taxon>Magnoliopsida</taxon>
        <taxon>eudicotyledons</taxon>
        <taxon>Gunneridae</taxon>
        <taxon>Pentapetalae</taxon>
        <taxon>rosids</taxon>
        <taxon>fabids</taxon>
        <taxon>Malpighiales</taxon>
        <taxon>Euphorbiaceae</taxon>
        <taxon>Acalyphoideae</taxon>
        <taxon>Acalypheae</taxon>
        <taxon>Ricinus</taxon>
    </lineage>
</organism>
<reference key="1">
    <citation type="journal article" date="1998" name="Planta">
        <title>A cysteine endopeptidase with a C-terminal KDEL motif isolated from castor bean endosperm is a marker enzyme for the ricinosome, a putative lytic compartment.</title>
        <authorList>
            <person name="Schmid M."/>
            <person name="Simpson D."/>
            <person name="Kalousek F."/>
            <person name="Gietl C."/>
        </authorList>
    </citation>
    <scope>NUCLEOTIDE SEQUENCE [MRNA]</scope>
    <source>
        <tissue>Endosperm</tissue>
    </source>
</reference>
<reference key="2">
    <citation type="journal article" date="2001" name="Proc. Natl. Acad. Sci. U.S.A.">
        <title>The ricinosomes of senescing plant tissue bud from the endoplasmic reticulum.</title>
        <authorList>
            <person name="Schmid M."/>
            <person name="Simpson D.J."/>
            <person name="Sarioglu H."/>
            <person name="Lottspeich F."/>
            <person name="Gietl C."/>
        </authorList>
    </citation>
    <scope>PROTEIN SEQUENCE OF 337-360</scope>
    <scope>PROTEOLYTIC PROCESSING</scope>
    <scope>SUBCELLULAR LOCATION</scope>
</reference>
<reference key="3">
    <citation type="journal article" date="2004" name="J. Mol. Biol.">
        <title>The 2.0 A crystal structure and substrate specificity of the KDEL-tailed cysteine endopeptidase functioning in programmed cell death of Ricinus communis endosperm.</title>
        <authorList>
            <person name="Than M.E."/>
            <person name="Helm M."/>
            <person name="Simpson D.J."/>
            <person name="Lottspeich F."/>
            <person name="Huber R."/>
            <person name="Gietl C."/>
        </authorList>
    </citation>
    <scope>X-RAY CRYSTALLOGRAPHY (2.00 ANGSTROMS) OF 125-350 IN COMPLEX WITH CHLOROMETHYLKETONE (CMK) INHIBITOR</scope>
    <scope>DISULFIDE BONDS</scope>
</reference>
<gene>
    <name type="primary">CYSEP</name>
</gene>
<dbReference type="EC" id="3.4.22.-" evidence="3"/>
<dbReference type="EMBL" id="AF050756">
    <property type="protein sequence ID" value="AAC62396.1"/>
    <property type="molecule type" value="mRNA"/>
</dbReference>
<dbReference type="PIR" id="T08122">
    <property type="entry name" value="T08122"/>
</dbReference>
<dbReference type="RefSeq" id="NP_001310675.1">
    <property type="nucleotide sequence ID" value="NM_001323746.1"/>
</dbReference>
<dbReference type="PDB" id="1S4V">
    <property type="method" value="X-ray"/>
    <property type="resolution" value="2.00 A"/>
    <property type="chains" value="A/B=125-353"/>
</dbReference>
<dbReference type="PDBsum" id="1S4V"/>
<dbReference type="SMR" id="O65039"/>
<dbReference type="MEROPS" id="C01.010"/>
<dbReference type="GeneID" id="8278243"/>
<dbReference type="KEGG" id="rcu:8278243"/>
<dbReference type="eggNOG" id="KOG1543">
    <property type="taxonomic scope" value="Eukaryota"/>
</dbReference>
<dbReference type="OMA" id="GKCDASK"/>
<dbReference type="OrthoDB" id="10253408at2759"/>
<dbReference type="BRENDA" id="3.4.22.B1">
    <property type="organism ID" value="1204"/>
</dbReference>
<dbReference type="EvolutionaryTrace" id="O65039"/>
<dbReference type="GO" id="GO:0031410">
    <property type="term" value="C:cytoplasmic vesicle"/>
    <property type="evidence" value="ECO:0007669"/>
    <property type="project" value="UniProtKB-KW"/>
</dbReference>
<dbReference type="GO" id="GO:0008234">
    <property type="term" value="F:cysteine-type peptidase activity"/>
    <property type="evidence" value="ECO:0007669"/>
    <property type="project" value="UniProtKB-KW"/>
</dbReference>
<dbReference type="GO" id="GO:0006508">
    <property type="term" value="P:proteolysis"/>
    <property type="evidence" value="ECO:0007669"/>
    <property type="project" value="UniProtKB-KW"/>
</dbReference>
<dbReference type="CDD" id="cd02248">
    <property type="entry name" value="Peptidase_C1A"/>
    <property type="match status" value="1"/>
</dbReference>
<dbReference type="FunFam" id="3.90.70.10:FF:000023">
    <property type="entry name" value="Senescence-specific cysteine protease SAG39"/>
    <property type="match status" value="1"/>
</dbReference>
<dbReference type="Gene3D" id="3.90.70.10">
    <property type="entry name" value="Cysteine proteinases"/>
    <property type="match status" value="1"/>
</dbReference>
<dbReference type="InterPro" id="IPR038765">
    <property type="entry name" value="Papain-like_cys_pep_sf"/>
</dbReference>
<dbReference type="InterPro" id="IPR025661">
    <property type="entry name" value="Pept_asp_AS"/>
</dbReference>
<dbReference type="InterPro" id="IPR000169">
    <property type="entry name" value="Pept_cys_AS"/>
</dbReference>
<dbReference type="InterPro" id="IPR025660">
    <property type="entry name" value="Pept_his_AS"/>
</dbReference>
<dbReference type="InterPro" id="IPR013128">
    <property type="entry name" value="Peptidase_C1A"/>
</dbReference>
<dbReference type="InterPro" id="IPR000668">
    <property type="entry name" value="Peptidase_C1A_C"/>
</dbReference>
<dbReference type="InterPro" id="IPR039417">
    <property type="entry name" value="Peptidase_C1A_papain-like"/>
</dbReference>
<dbReference type="InterPro" id="IPR013201">
    <property type="entry name" value="Prot_inhib_I29"/>
</dbReference>
<dbReference type="PANTHER" id="PTHR12411">
    <property type="entry name" value="CYSTEINE PROTEASE FAMILY C1-RELATED"/>
    <property type="match status" value="1"/>
</dbReference>
<dbReference type="Pfam" id="PF08246">
    <property type="entry name" value="Inhibitor_I29"/>
    <property type="match status" value="1"/>
</dbReference>
<dbReference type="Pfam" id="PF00112">
    <property type="entry name" value="Peptidase_C1"/>
    <property type="match status" value="1"/>
</dbReference>
<dbReference type="PRINTS" id="PR00705">
    <property type="entry name" value="PAPAIN"/>
</dbReference>
<dbReference type="SMART" id="SM00848">
    <property type="entry name" value="Inhibitor_I29"/>
    <property type="match status" value="1"/>
</dbReference>
<dbReference type="SMART" id="SM00645">
    <property type="entry name" value="Pept_C1"/>
    <property type="match status" value="1"/>
</dbReference>
<dbReference type="SUPFAM" id="SSF54001">
    <property type="entry name" value="Cysteine proteinases"/>
    <property type="match status" value="1"/>
</dbReference>
<dbReference type="PROSITE" id="PS00014">
    <property type="entry name" value="ER_TARGET"/>
    <property type="match status" value="1"/>
</dbReference>
<dbReference type="PROSITE" id="PS00640">
    <property type="entry name" value="THIOL_PROTEASE_ASN"/>
    <property type="match status" value="1"/>
</dbReference>
<dbReference type="PROSITE" id="PS00139">
    <property type="entry name" value="THIOL_PROTEASE_CYS"/>
    <property type="match status" value="1"/>
</dbReference>
<dbReference type="PROSITE" id="PS00639">
    <property type="entry name" value="THIOL_PROTEASE_HIS"/>
    <property type="match status" value="1"/>
</dbReference>
<comment type="function">
    <text>Involved in programmed cell death. Shows a pronounced preference for hydrophobic residues in the P2 position and no obvious preference in the P1 position of the cleavage site. Accepts proline at the P1 and P1' positions.</text>
</comment>
<comment type="activity regulation">
    <text>Low pH triggers activation of the protease and removal of the propeptide and the KDEL motif.</text>
</comment>
<comment type="subcellular location">
    <subcellularLocation>
        <location evidence="10">Cytoplasmic vesicle</location>
    </subcellularLocation>
    <text>The pro-endopeptidase accumulates in the ricinosomes.</text>
</comment>
<comment type="developmental stage">
    <text>Released during the final stage of cellular desintegration in the senescing endosperm of germinating bean.</text>
</comment>
<comment type="PTM">
    <text>The potential N-glycosylation site at Asn-115 is not glycosylated.</text>
</comment>
<comment type="miscellaneous">
    <text>The pro-endopeptidase goes directly from the ER lumen to the ricinosome, and the secretory pathway via the Golgi apparatus is not involved in the ricinosome biogenesis.</text>
</comment>
<comment type="similarity">
    <text evidence="6 7 8">Belongs to the peptidase C1 family.</text>
</comment>
<proteinExistence type="evidence at protein level"/>
<evidence type="ECO:0000250" key="1"/>
<evidence type="ECO:0000250" key="2">
    <source>
        <dbReference type="UniProtKB" id="P00785"/>
    </source>
</evidence>
<evidence type="ECO:0000250" key="3">
    <source>
        <dbReference type="UniProtKB" id="P80884"/>
    </source>
</evidence>
<evidence type="ECO:0000250" key="4">
    <source>
        <dbReference type="UniProtKB" id="V5LU01"/>
    </source>
</evidence>
<evidence type="ECO:0000255" key="5">
    <source>
        <dbReference type="PROSITE-ProRule" id="PRU00498"/>
    </source>
</evidence>
<evidence type="ECO:0000255" key="6">
    <source>
        <dbReference type="PROSITE-ProRule" id="PRU10088"/>
    </source>
</evidence>
<evidence type="ECO:0000255" key="7">
    <source>
        <dbReference type="PROSITE-ProRule" id="PRU10089"/>
    </source>
</evidence>
<evidence type="ECO:0000255" key="8">
    <source>
        <dbReference type="PROSITE-ProRule" id="PRU10090"/>
    </source>
</evidence>
<evidence type="ECO:0000256" key="9">
    <source>
        <dbReference type="SAM" id="MobiDB-lite"/>
    </source>
</evidence>
<evidence type="ECO:0000269" key="10">
    <source>
    </source>
</evidence>
<evidence type="ECO:0000269" key="11">
    <source>
    </source>
</evidence>
<evidence type="ECO:0007744" key="12">
    <source>
        <dbReference type="PDB" id="1S4V"/>
    </source>
</evidence>
<evidence type="ECO:0007829" key="13">
    <source>
        <dbReference type="PDB" id="1S4V"/>
    </source>
</evidence>
<keyword id="KW-0002">3D-structure</keyword>
<keyword id="KW-0968">Cytoplasmic vesicle</keyword>
<keyword id="KW-0903">Direct protein sequencing</keyword>
<keyword id="KW-1015">Disulfide bond</keyword>
<keyword id="KW-0325">Glycoprotein</keyword>
<keyword id="KW-0378">Hydrolase</keyword>
<keyword id="KW-0645">Protease</keyword>
<keyword id="KW-0732">Signal</keyword>
<keyword id="KW-0788">Thiol protease</keyword>
<accession>O65039</accession>